<sequence length="362" mass="39739">MGFTTSSVTDAIAALDERSKEIFRRIVEGYLENGEPLGSRNLSRLLPMSLSPASVRNVMSDLEELGLIYSPHISAGRLPTQIGLRFFVDAFMQVGDLSAEDRATIDRQVRGSNRDQPMESVMTEASRMLSGISRGAGLVITSKNDPVLKHVEFIRLEPTKALAVLVGDHDQVENRIIELPAGITSSQLTEAANFLNAHMTGQTLPDLRRQLLTLKESVRHELDTLSHELVERGIAVWSGGEDEGKPTQLIVRGHANLLTEVGGAEDLDRLRLLFDDLEKKDSLIEILNLAESGPGVRIFIGSENKLFSLSGSSLIVAPYRDDDDRIIGAVGVIGPTRLNYARIVPMVDYTAQLFSRMSRPGL</sequence>
<name>HRCA_RHIR8</name>
<gene>
    <name evidence="1" type="primary">hrcA</name>
    <name type="ordered locus">Arad_0612</name>
</gene>
<feature type="chain" id="PRO_1000118283" description="Heat-inducible transcription repressor HrcA">
    <location>
        <begin position="1"/>
        <end position="362"/>
    </location>
</feature>
<comment type="function">
    <text evidence="1">Negative regulator of class I heat shock genes (grpE-dnaK-dnaJ and groELS operons). Prevents heat-shock induction of these operons.</text>
</comment>
<comment type="similarity">
    <text evidence="1">Belongs to the HrcA family.</text>
</comment>
<organism>
    <name type="scientific">Rhizobium rhizogenes (strain K84 / ATCC BAA-868)</name>
    <name type="common">Agrobacterium radiobacter</name>
    <dbReference type="NCBI Taxonomy" id="311403"/>
    <lineage>
        <taxon>Bacteria</taxon>
        <taxon>Pseudomonadati</taxon>
        <taxon>Pseudomonadota</taxon>
        <taxon>Alphaproteobacteria</taxon>
        <taxon>Hyphomicrobiales</taxon>
        <taxon>Rhizobiaceae</taxon>
        <taxon>Rhizobium/Agrobacterium group</taxon>
        <taxon>Rhizobium</taxon>
    </lineage>
</organism>
<evidence type="ECO:0000255" key="1">
    <source>
        <dbReference type="HAMAP-Rule" id="MF_00081"/>
    </source>
</evidence>
<keyword id="KW-0678">Repressor</keyword>
<keyword id="KW-0346">Stress response</keyword>
<keyword id="KW-0804">Transcription</keyword>
<keyword id="KW-0805">Transcription regulation</keyword>
<reference key="1">
    <citation type="journal article" date="2009" name="J. Bacteriol.">
        <title>Genome sequences of three Agrobacterium biovars help elucidate the evolution of multichromosome genomes in bacteria.</title>
        <authorList>
            <person name="Slater S.C."/>
            <person name="Goldman B.S."/>
            <person name="Goodner B."/>
            <person name="Setubal J.C."/>
            <person name="Farrand S.K."/>
            <person name="Nester E.W."/>
            <person name="Burr T.J."/>
            <person name="Banta L."/>
            <person name="Dickerman A.W."/>
            <person name="Paulsen I."/>
            <person name="Otten L."/>
            <person name="Suen G."/>
            <person name="Welch R."/>
            <person name="Almeida N.F."/>
            <person name="Arnold F."/>
            <person name="Burton O.T."/>
            <person name="Du Z."/>
            <person name="Ewing A."/>
            <person name="Godsy E."/>
            <person name="Heisel S."/>
            <person name="Houmiel K.L."/>
            <person name="Jhaveri J."/>
            <person name="Lu J."/>
            <person name="Miller N.M."/>
            <person name="Norton S."/>
            <person name="Chen Q."/>
            <person name="Phoolcharoen W."/>
            <person name="Ohlin V."/>
            <person name="Ondrusek D."/>
            <person name="Pride N."/>
            <person name="Stricklin S.L."/>
            <person name="Sun J."/>
            <person name="Wheeler C."/>
            <person name="Wilson L."/>
            <person name="Zhu H."/>
            <person name="Wood D.W."/>
        </authorList>
    </citation>
    <scope>NUCLEOTIDE SEQUENCE [LARGE SCALE GENOMIC DNA]</scope>
    <source>
        <strain>K84 / ATCC BAA-868</strain>
    </source>
</reference>
<accession>B9J7U0</accession>
<proteinExistence type="inferred from homology"/>
<protein>
    <recommendedName>
        <fullName evidence="1">Heat-inducible transcription repressor HrcA</fullName>
    </recommendedName>
</protein>
<dbReference type="EMBL" id="CP000628">
    <property type="protein sequence ID" value="ACM25262.1"/>
    <property type="molecule type" value="Genomic_DNA"/>
</dbReference>
<dbReference type="RefSeq" id="WP_007695316.1">
    <property type="nucleotide sequence ID" value="NC_011985.1"/>
</dbReference>
<dbReference type="SMR" id="B9J7U0"/>
<dbReference type="STRING" id="311403.Arad_0612"/>
<dbReference type="GeneID" id="86847076"/>
<dbReference type="KEGG" id="ara:Arad_0612"/>
<dbReference type="eggNOG" id="COG1420">
    <property type="taxonomic scope" value="Bacteria"/>
</dbReference>
<dbReference type="HOGENOM" id="CLU_050019_0_0_5"/>
<dbReference type="Proteomes" id="UP000001600">
    <property type="component" value="Chromosome 1"/>
</dbReference>
<dbReference type="GO" id="GO:0003677">
    <property type="term" value="F:DNA binding"/>
    <property type="evidence" value="ECO:0007669"/>
    <property type="project" value="InterPro"/>
</dbReference>
<dbReference type="GO" id="GO:0045892">
    <property type="term" value="P:negative regulation of DNA-templated transcription"/>
    <property type="evidence" value="ECO:0007669"/>
    <property type="project" value="UniProtKB-UniRule"/>
</dbReference>
<dbReference type="Gene3D" id="3.30.450.40">
    <property type="match status" value="1"/>
</dbReference>
<dbReference type="Gene3D" id="3.30.390.60">
    <property type="entry name" value="Heat-inducible transcription repressor hrca homolog, domain 3"/>
    <property type="match status" value="1"/>
</dbReference>
<dbReference type="Gene3D" id="1.10.10.10">
    <property type="entry name" value="Winged helix-like DNA-binding domain superfamily/Winged helix DNA-binding domain"/>
    <property type="match status" value="1"/>
</dbReference>
<dbReference type="HAMAP" id="MF_00081">
    <property type="entry name" value="HrcA"/>
    <property type="match status" value="1"/>
</dbReference>
<dbReference type="InterPro" id="IPR029016">
    <property type="entry name" value="GAF-like_dom_sf"/>
</dbReference>
<dbReference type="InterPro" id="IPR002571">
    <property type="entry name" value="HrcA"/>
</dbReference>
<dbReference type="InterPro" id="IPR021153">
    <property type="entry name" value="HrcA_C"/>
</dbReference>
<dbReference type="InterPro" id="IPR036388">
    <property type="entry name" value="WH-like_DNA-bd_sf"/>
</dbReference>
<dbReference type="InterPro" id="IPR036390">
    <property type="entry name" value="WH_DNA-bd_sf"/>
</dbReference>
<dbReference type="InterPro" id="IPR023120">
    <property type="entry name" value="WHTH_transcript_rep_HrcA_IDD"/>
</dbReference>
<dbReference type="NCBIfam" id="TIGR00331">
    <property type="entry name" value="hrcA"/>
    <property type="match status" value="1"/>
</dbReference>
<dbReference type="PANTHER" id="PTHR34824">
    <property type="entry name" value="HEAT-INDUCIBLE TRANSCRIPTION REPRESSOR HRCA"/>
    <property type="match status" value="1"/>
</dbReference>
<dbReference type="PANTHER" id="PTHR34824:SF1">
    <property type="entry name" value="HEAT-INDUCIBLE TRANSCRIPTION REPRESSOR HRCA"/>
    <property type="match status" value="1"/>
</dbReference>
<dbReference type="Pfam" id="PF01628">
    <property type="entry name" value="HrcA"/>
    <property type="match status" value="1"/>
</dbReference>
<dbReference type="PIRSF" id="PIRSF005485">
    <property type="entry name" value="HrcA"/>
    <property type="match status" value="1"/>
</dbReference>
<dbReference type="SUPFAM" id="SSF55781">
    <property type="entry name" value="GAF domain-like"/>
    <property type="match status" value="1"/>
</dbReference>
<dbReference type="SUPFAM" id="SSF46785">
    <property type="entry name" value="Winged helix' DNA-binding domain"/>
    <property type="match status" value="1"/>
</dbReference>